<name>HSLU_STAA3</name>
<feature type="chain" id="PRO_1000012818" description="ATP-dependent protease ATPase subunit HslU">
    <location>
        <begin position="1"/>
        <end position="467"/>
    </location>
</feature>
<feature type="region of interest" description="Disordered" evidence="2">
    <location>
        <begin position="149"/>
        <end position="192"/>
    </location>
</feature>
<feature type="compositionally biased region" description="Basic and acidic residues" evidence="2">
    <location>
        <begin position="178"/>
        <end position="192"/>
    </location>
</feature>
<feature type="binding site" evidence="1">
    <location>
        <position position="22"/>
    </location>
    <ligand>
        <name>ATP</name>
        <dbReference type="ChEBI" id="CHEBI:30616"/>
    </ligand>
</feature>
<feature type="binding site" evidence="1">
    <location>
        <begin position="64"/>
        <end position="69"/>
    </location>
    <ligand>
        <name>ATP</name>
        <dbReference type="ChEBI" id="CHEBI:30616"/>
    </ligand>
</feature>
<feature type="binding site" evidence="1">
    <location>
        <position position="280"/>
    </location>
    <ligand>
        <name>ATP</name>
        <dbReference type="ChEBI" id="CHEBI:30616"/>
    </ligand>
</feature>
<feature type="binding site" evidence="1">
    <location>
        <position position="345"/>
    </location>
    <ligand>
        <name>ATP</name>
        <dbReference type="ChEBI" id="CHEBI:30616"/>
    </ligand>
</feature>
<feature type="binding site" evidence="1">
    <location>
        <position position="417"/>
    </location>
    <ligand>
        <name>ATP</name>
        <dbReference type="ChEBI" id="CHEBI:30616"/>
    </ligand>
</feature>
<sequence>MDTAGIRLTPKEIVSKLNEYIVGQNDAKRKVAIALRNRYRRSLLDEESKQEISPKNILMIGPTGVGKTEIARRMAKVVGAPFIKVEATKFTEVGYVGRDVESMVRDLVDVSVRLVKAQKKSLVQDEATAKANEKLVKLLVPSMKKKASQTNNPLESLFGGAIPNFGQNNEDEEEPPTEEIKTKRSEIKRQLEEGKLEKEKVRIKVEQDPGALGMLGTNQNQQMQEMMNQLMPKKKVEREVAVETARKILADSYADELIDQESANQEALELAEQMGIIFIDEIDKVATNNHNSGQDVSRQGVQRDILPILEGSVIQTKYGTVNTEHMLFIGAGAFHVSKPSDLIPELQGRFPIRVELDSLSVEDFVRILTEPKLSLIKQYEALLQTEEVTVNFTDEAITRLAEIAYQVNQDTDNIGARRLHTILEKMLEDLSFEAPSMPNAVVDITPQYVDDKLKSISTNKDLSAFIL</sequence>
<proteinExistence type="inferred from homology"/>
<keyword id="KW-0067">ATP-binding</keyword>
<keyword id="KW-0143">Chaperone</keyword>
<keyword id="KW-0963">Cytoplasm</keyword>
<keyword id="KW-0547">Nucleotide-binding</keyword>
<keyword id="KW-0346">Stress response</keyword>
<dbReference type="EMBL" id="CP000255">
    <property type="protein sequence ID" value="ABD21400.1"/>
    <property type="molecule type" value="Genomic_DNA"/>
</dbReference>
<dbReference type="RefSeq" id="WP_000379054.1">
    <property type="nucleotide sequence ID" value="NZ_CP027476.1"/>
</dbReference>
<dbReference type="SMR" id="Q2FHI4"/>
<dbReference type="KEGG" id="saa:SAUSA300_1147"/>
<dbReference type="HOGENOM" id="CLU_033123_0_0_9"/>
<dbReference type="OMA" id="YGMIKTD"/>
<dbReference type="Proteomes" id="UP000001939">
    <property type="component" value="Chromosome"/>
</dbReference>
<dbReference type="GO" id="GO:0009376">
    <property type="term" value="C:HslUV protease complex"/>
    <property type="evidence" value="ECO:0007669"/>
    <property type="project" value="UniProtKB-UniRule"/>
</dbReference>
<dbReference type="GO" id="GO:0005524">
    <property type="term" value="F:ATP binding"/>
    <property type="evidence" value="ECO:0007669"/>
    <property type="project" value="UniProtKB-UniRule"/>
</dbReference>
<dbReference type="GO" id="GO:0016887">
    <property type="term" value="F:ATP hydrolysis activity"/>
    <property type="evidence" value="ECO:0007669"/>
    <property type="project" value="InterPro"/>
</dbReference>
<dbReference type="GO" id="GO:0008233">
    <property type="term" value="F:peptidase activity"/>
    <property type="evidence" value="ECO:0007669"/>
    <property type="project" value="InterPro"/>
</dbReference>
<dbReference type="GO" id="GO:0036402">
    <property type="term" value="F:proteasome-activating activity"/>
    <property type="evidence" value="ECO:0007669"/>
    <property type="project" value="UniProtKB-UniRule"/>
</dbReference>
<dbReference type="GO" id="GO:0043335">
    <property type="term" value="P:protein unfolding"/>
    <property type="evidence" value="ECO:0007669"/>
    <property type="project" value="UniProtKB-UniRule"/>
</dbReference>
<dbReference type="GO" id="GO:0051603">
    <property type="term" value="P:proteolysis involved in protein catabolic process"/>
    <property type="evidence" value="ECO:0007669"/>
    <property type="project" value="TreeGrafter"/>
</dbReference>
<dbReference type="CDD" id="cd19498">
    <property type="entry name" value="RecA-like_HslU"/>
    <property type="match status" value="1"/>
</dbReference>
<dbReference type="FunFam" id="3.40.50.300:FF:000220">
    <property type="entry name" value="ATP-dependent protease ATPase subunit HslU"/>
    <property type="match status" value="1"/>
</dbReference>
<dbReference type="Gene3D" id="1.10.8.60">
    <property type="match status" value="1"/>
</dbReference>
<dbReference type="Gene3D" id="1.10.8.10">
    <property type="entry name" value="DNA helicase RuvA subunit, C-terminal domain"/>
    <property type="match status" value="1"/>
</dbReference>
<dbReference type="Gene3D" id="3.40.50.300">
    <property type="entry name" value="P-loop containing nucleotide triphosphate hydrolases"/>
    <property type="match status" value="2"/>
</dbReference>
<dbReference type="HAMAP" id="MF_00249">
    <property type="entry name" value="HslU"/>
    <property type="match status" value="1"/>
</dbReference>
<dbReference type="InterPro" id="IPR003593">
    <property type="entry name" value="AAA+_ATPase"/>
</dbReference>
<dbReference type="InterPro" id="IPR050052">
    <property type="entry name" value="ATP-dep_Clp_protease_ClpX"/>
</dbReference>
<dbReference type="InterPro" id="IPR003959">
    <property type="entry name" value="ATPase_AAA_core"/>
</dbReference>
<dbReference type="InterPro" id="IPR019489">
    <property type="entry name" value="Clp_ATPase_C"/>
</dbReference>
<dbReference type="InterPro" id="IPR004491">
    <property type="entry name" value="HslU"/>
</dbReference>
<dbReference type="InterPro" id="IPR027417">
    <property type="entry name" value="P-loop_NTPase"/>
</dbReference>
<dbReference type="NCBIfam" id="TIGR00390">
    <property type="entry name" value="hslU"/>
    <property type="match status" value="1"/>
</dbReference>
<dbReference type="NCBIfam" id="NF003544">
    <property type="entry name" value="PRK05201.1"/>
    <property type="match status" value="1"/>
</dbReference>
<dbReference type="PANTHER" id="PTHR48102">
    <property type="entry name" value="ATP-DEPENDENT CLP PROTEASE ATP-BINDING SUBUNIT CLPX-LIKE, MITOCHONDRIAL-RELATED"/>
    <property type="match status" value="1"/>
</dbReference>
<dbReference type="PANTHER" id="PTHR48102:SF3">
    <property type="entry name" value="ATP-DEPENDENT PROTEASE ATPASE SUBUNIT HSLU"/>
    <property type="match status" value="1"/>
</dbReference>
<dbReference type="Pfam" id="PF00004">
    <property type="entry name" value="AAA"/>
    <property type="match status" value="1"/>
</dbReference>
<dbReference type="Pfam" id="PF07724">
    <property type="entry name" value="AAA_2"/>
    <property type="match status" value="1"/>
</dbReference>
<dbReference type="Pfam" id="PF10431">
    <property type="entry name" value="ClpB_D2-small"/>
    <property type="match status" value="1"/>
</dbReference>
<dbReference type="SMART" id="SM00382">
    <property type="entry name" value="AAA"/>
    <property type="match status" value="1"/>
</dbReference>
<dbReference type="SMART" id="SM01086">
    <property type="entry name" value="ClpB_D2-small"/>
    <property type="match status" value="1"/>
</dbReference>
<dbReference type="SUPFAM" id="SSF52540">
    <property type="entry name" value="P-loop containing nucleoside triphosphate hydrolases"/>
    <property type="match status" value="1"/>
</dbReference>
<accession>Q2FHI4</accession>
<gene>
    <name evidence="1" type="primary">hslU</name>
    <name type="ordered locus">SAUSA300_1147</name>
</gene>
<protein>
    <recommendedName>
        <fullName evidence="1">ATP-dependent protease ATPase subunit HslU</fullName>
    </recommendedName>
    <alternativeName>
        <fullName evidence="1">Unfoldase HslU</fullName>
    </alternativeName>
</protein>
<organism>
    <name type="scientific">Staphylococcus aureus (strain USA300)</name>
    <dbReference type="NCBI Taxonomy" id="367830"/>
    <lineage>
        <taxon>Bacteria</taxon>
        <taxon>Bacillati</taxon>
        <taxon>Bacillota</taxon>
        <taxon>Bacilli</taxon>
        <taxon>Bacillales</taxon>
        <taxon>Staphylococcaceae</taxon>
        <taxon>Staphylococcus</taxon>
    </lineage>
</organism>
<comment type="function">
    <text evidence="1">ATPase subunit of a proteasome-like degradation complex; this subunit has chaperone activity. The binding of ATP and its subsequent hydrolysis by HslU are essential for unfolding of protein substrates subsequently hydrolyzed by HslV. HslU recognizes the N-terminal part of its protein substrates and unfolds these before they are guided to HslV for hydrolysis.</text>
</comment>
<comment type="subunit">
    <text evidence="1">A double ring-shaped homohexamer of HslV is capped on each side by a ring-shaped HslU homohexamer. The assembly of the HslU/HslV complex is dependent on binding of ATP.</text>
</comment>
<comment type="subcellular location">
    <subcellularLocation>
        <location evidence="1">Cytoplasm</location>
    </subcellularLocation>
</comment>
<comment type="similarity">
    <text evidence="1">Belongs to the ClpX chaperone family. HslU subfamily.</text>
</comment>
<reference key="1">
    <citation type="journal article" date="2006" name="Lancet">
        <title>Complete genome sequence of USA300, an epidemic clone of community-acquired meticillin-resistant Staphylococcus aureus.</title>
        <authorList>
            <person name="Diep B.A."/>
            <person name="Gill S.R."/>
            <person name="Chang R.F."/>
            <person name="Phan T.H."/>
            <person name="Chen J.H."/>
            <person name="Davidson M.G."/>
            <person name="Lin F."/>
            <person name="Lin J."/>
            <person name="Carleton H.A."/>
            <person name="Mongodin E.F."/>
            <person name="Sensabaugh G.F."/>
            <person name="Perdreau-Remington F."/>
        </authorList>
    </citation>
    <scope>NUCLEOTIDE SEQUENCE [LARGE SCALE GENOMIC DNA]</scope>
    <source>
        <strain>USA300</strain>
    </source>
</reference>
<evidence type="ECO:0000255" key="1">
    <source>
        <dbReference type="HAMAP-Rule" id="MF_00249"/>
    </source>
</evidence>
<evidence type="ECO:0000256" key="2">
    <source>
        <dbReference type="SAM" id="MobiDB-lite"/>
    </source>
</evidence>